<gene>
    <name type="primary">VPS24-1</name>
    <name type="synonym">CHMP3-1</name>
    <name type="ordered locus">At5g22950</name>
    <name type="ORF">MRN17.18</name>
</gene>
<sequence>MERVMNIIKPKPDPKQLLRDWQRKLRQECRNIERQIRDIQKEERNVQKAIKEAAKRNDMVSAKALAKEIVSSRRTVNRLYENKAQMNSISMHLGESVAIARTVGHLSKSAEVMKLVNNLMKAPQMAATMQEFSKEMTKAGVIEEFVNEAIDNALDSEDMEEEIDEEVDKVLTAIAGETAAELPVAVRKERIKVPAQKASTSREEEAVAEGVDDEEELEEIRARLAKVRS</sequence>
<name>VP241_ARATH</name>
<accession>Q9FFB3</accession>
<accession>Q56ZX9</accession>
<accession>Q8H7C1</accession>
<dbReference type="EMBL" id="AB005243">
    <property type="protein sequence ID" value="BAB10616.1"/>
    <property type="molecule type" value="Genomic_DNA"/>
</dbReference>
<dbReference type="EMBL" id="CP002688">
    <property type="protein sequence ID" value="AED93100.1"/>
    <property type="molecule type" value="Genomic_DNA"/>
</dbReference>
<dbReference type="EMBL" id="AY054614">
    <property type="protein sequence ID" value="AAK96805.1"/>
    <property type="molecule type" value="mRNA"/>
</dbReference>
<dbReference type="EMBL" id="AY128742">
    <property type="protein sequence ID" value="AAM91142.1"/>
    <property type="molecule type" value="mRNA"/>
</dbReference>
<dbReference type="EMBL" id="AF083749">
    <property type="protein sequence ID" value="AAN60307.1"/>
    <property type="status" value="ALT_INIT"/>
    <property type="molecule type" value="mRNA"/>
</dbReference>
<dbReference type="EMBL" id="AK220831">
    <property type="protein sequence ID" value="BAD94140.1"/>
    <property type="molecule type" value="mRNA"/>
</dbReference>
<dbReference type="RefSeq" id="NP_197686.1">
    <property type="nucleotide sequence ID" value="NM_122201.2"/>
</dbReference>
<dbReference type="SMR" id="Q9FFB3"/>
<dbReference type="BioGRID" id="17634">
    <property type="interactions" value="8"/>
</dbReference>
<dbReference type="FunCoup" id="Q9FFB3">
    <property type="interactions" value="3762"/>
</dbReference>
<dbReference type="IntAct" id="Q9FFB3">
    <property type="interactions" value="5"/>
</dbReference>
<dbReference type="STRING" id="3702.Q9FFB3"/>
<dbReference type="TCDB" id="3.A.31.1.2">
    <property type="family name" value="the endosomal sorting complexes required for transport iii (escrt-iii) family"/>
</dbReference>
<dbReference type="iPTMnet" id="Q9FFB3"/>
<dbReference type="PaxDb" id="3702-AT5G22950.1"/>
<dbReference type="ProteomicsDB" id="242733"/>
<dbReference type="EnsemblPlants" id="AT5G22950.1">
    <property type="protein sequence ID" value="AT5G22950.1"/>
    <property type="gene ID" value="AT5G22950"/>
</dbReference>
<dbReference type="GeneID" id="832359"/>
<dbReference type="Gramene" id="AT5G22950.1">
    <property type="protein sequence ID" value="AT5G22950.1"/>
    <property type="gene ID" value="AT5G22950"/>
</dbReference>
<dbReference type="KEGG" id="ath:AT5G22950"/>
<dbReference type="Araport" id="AT5G22950"/>
<dbReference type="TAIR" id="AT5G22950">
    <property type="gene designation" value="VPS24.1"/>
</dbReference>
<dbReference type="eggNOG" id="KOG3229">
    <property type="taxonomic scope" value="Eukaryota"/>
</dbReference>
<dbReference type="HOGENOM" id="CLU_069208_0_0_1"/>
<dbReference type="InParanoid" id="Q9FFB3"/>
<dbReference type="OMA" id="EMMKIGI"/>
<dbReference type="OrthoDB" id="1099672at2759"/>
<dbReference type="PhylomeDB" id="Q9FFB3"/>
<dbReference type="CD-CODE" id="4299E36E">
    <property type="entry name" value="Nucleolus"/>
</dbReference>
<dbReference type="PRO" id="PR:Q9FFB3"/>
<dbReference type="Proteomes" id="UP000006548">
    <property type="component" value="Chromosome 5"/>
</dbReference>
<dbReference type="ExpressionAtlas" id="Q9FFB3">
    <property type="expression patterns" value="baseline and differential"/>
</dbReference>
<dbReference type="GO" id="GO:0005829">
    <property type="term" value="C:cytosol"/>
    <property type="evidence" value="ECO:0000314"/>
    <property type="project" value="TAIR"/>
</dbReference>
<dbReference type="GO" id="GO:0000815">
    <property type="term" value="C:ESCRT III complex"/>
    <property type="evidence" value="ECO:0000250"/>
    <property type="project" value="TAIR"/>
</dbReference>
<dbReference type="GO" id="GO:0005770">
    <property type="term" value="C:late endosome"/>
    <property type="evidence" value="ECO:0000314"/>
    <property type="project" value="TAIR"/>
</dbReference>
<dbReference type="GO" id="GO:0070676">
    <property type="term" value="P:intralumenal vesicle formation"/>
    <property type="evidence" value="ECO:0000314"/>
    <property type="project" value="TAIR"/>
</dbReference>
<dbReference type="GO" id="GO:0015031">
    <property type="term" value="P:protein transport"/>
    <property type="evidence" value="ECO:0007669"/>
    <property type="project" value="UniProtKB-KW"/>
</dbReference>
<dbReference type="GO" id="GO:0007034">
    <property type="term" value="P:vacuolar transport"/>
    <property type="evidence" value="ECO:0007669"/>
    <property type="project" value="InterPro"/>
</dbReference>
<dbReference type="Gene3D" id="6.10.140.1230">
    <property type="match status" value="1"/>
</dbReference>
<dbReference type="InterPro" id="IPR005024">
    <property type="entry name" value="Snf7_fam"/>
</dbReference>
<dbReference type="PANTHER" id="PTHR10476">
    <property type="entry name" value="CHARGED MULTIVESICULAR BODY PROTEIN"/>
    <property type="match status" value="1"/>
</dbReference>
<dbReference type="Pfam" id="PF03357">
    <property type="entry name" value="Snf7"/>
    <property type="match status" value="1"/>
</dbReference>
<feature type="chain" id="PRO_0000368198" description="Vacuolar protein sorting-associated protein 24 homolog 1">
    <location>
        <begin position="1"/>
        <end position="229"/>
    </location>
</feature>
<feature type="region of interest" description="Disordered" evidence="4">
    <location>
        <begin position="193"/>
        <end position="215"/>
    </location>
</feature>
<feature type="coiled-coil region" evidence="3">
    <location>
        <begin position="15"/>
        <end position="60"/>
    </location>
</feature>
<feature type="compositionally biased region" description="Acidic residues" evidence="4">
    <location>
        <begin position="206"/>
        <end position="215"/>
    </location>
</feature>
<protein>
    <recommendedName>
        <fullName>Vacuolar protein sorting-associated protein 24 homolog 1</fullName>
        <shortName>AtVPS24-1</shortName>
    </recommendedName>
    <alternativeName>
        <fullName>Charged multivesicular body protein 3 homolog 1</fullName>
    </alternativeName>
    <alternativeName>
        <fullName>ESCRT-III complex subunit VPS24 homolog 1</fullName>
    </alternativeName>
</protein>
<reference key="1">
    <citation type="journal article" date="1997" name="DNA Res.">
        <title>Structural analysis of Arabidopsis thaliana chromosome 5. I. Sequence features of the 1.6 Mb regions covered by twenty physically assigned P1 clones.</title>
        <authorList>
            <person name="Sato S."/>
            <person name="Kotani H."/>
            <person name="Nakamura Y."/>
            <person name="Kaneko T."/>
            <person name="Asamizu E."/>
            <person name="Fukami M."/>
            <person name="Miyajima N."/>
            <person name="Tabata S."/>
        </authorList>
    </citation>
    <scope>NUCLEOTIDE SEQUENCE [LARGE SCALE GENOMIC DNA]</scope>
    <source>
        <strain>cv. Columbia</strain>
    </source>
</reference>
<reference key="2">
    <citation type="journal article" date="2017" name="Plant J.">
        <title>Araport11: a complete reannotation of the Arabidopsis thaliana reference genome.</title>
        <authorList>
            <person name="Cheng C.Y."/>
            <person name="Krishnakumar V."/>
            <person name="Chan A.P."/>
            <person name="Thibaud-Nissen F."/>
            <person name="Schobel S."/>
            <person name="Town C.D."/>
        </authorList>
    </citation>
    <scope>GENOME REANNOTATION</scope>
    <source>
        <strain>cv. Columbia</strain>
    </source>
</reference>
<reference key="3">
    <citation type="journal article" date="2003" name="Science">
        <title>Empirical analysis of transcriptional activity in the Arabidopsis genome.</title>
        <authorList>
            <person name="Yamada K."/>
            <person name="Lim J."/>
            <person name="Dale J.M."/>
            <person name="Chen H."/>
            <person name="Shinn P."/>
            <person name="Palm C.J."/>
            <person name="Southwick A.M."/>
            <person name="Wu H.C."/>
            <person name="Kim C.J."/>
            <person name="Nguyen M."/>
            <person name="Pham P.K."/>
            <person name="Cheuk R.F."/>
            <person name="Karlin-Newmann G."/>
            <person name="Liu S.X."/>
            <person name="Lam B."/>
            <person name="Sakano H."/>
            <person name="Wu T."/>
            <person name="Yu G."/>
            <person name="Miranda M."/>
            <person name="Quach H.L."/>
            <person name="Tripp M."/>
            <person name="Chang C.H."/>
            <person name="Lee J.M."/>
            <person name="Toriumi M.J."/>
            <person name="Chan M.M."/>
            <person name="Tang C.C."/>
            <person name="Onodera C.S."/>
            <person name="Deng J.M."/>
            <person name="Akiyama K."/>
            <person name="Ansari Y."/>
            <person name="Arakawa T."/>
            <person name="Banh J."/>
            <person name="Banno F."/>
            <person name="Bowser L."/>
            <person name="Brooks S.Y."/>
            <person name="Carninci P."/>
            <person name="Chao Q."/>
            <person name="Choy N."/>
            <person name="Enju A."/>
            <person name="Goldsmith A.D."/>
            <person name="Gurjal M."/>
            <person name="Hansen N.F."/>
            <person name="Hayashizaki Y."/>
            <person name="Johnson-Hopson C."/>
            <person name="Hsuan V.W."/>
            <person name="Iida K."/>
            <person name="Karnes M."/>
            <person name="Khan S."/>
            <person name="Koesema E."/>
            <person name="Ishida J."/>
            <person name="Jiang P.X."/>
            <person name="Jones T."/>
            <person name="Kawai J."/>
            <person name="Kamiya A."/>
            <person name="Meyers C."/>
            <person name="Nakajima M."/>
            <person name="Narusaka M."/>
            <person name="Seki M."/>
            <person name="Sakurai T."/>
            <person name="Satou M."/>
            <person name="Tamse R."/>
            <person name="Vaysberg M."/>
            <person name="Wallender E.K."/>
            <person name="Wong C."/>
            <person name="Yamamura Y."/>
            <person name="Yuan S."/>
            <person name="Shinozaki K."/>
            <person name="Davis R.W."/>
            <person name="Theologis A."/>
            <person name="Ecker J.R."/>
        </authorList>
    </citation>
    <scope>NUCLEOTIDE SEQUENCE [LARGE SCALE MRNA]</scope>
    <source>
        <strain>cv. Columbia</strain>
    </source>
</reference>
<reference key="4">
    <citation type="submission" date="1998-08" db="EMBL/GenBank/DDBJ databases">
        <title>Signal peptide selection derived cDNAs from Arabidopsis thaliana leaves and guard cells.</title>
        <authorList>
            <person name="Stracke R."/>
            <person name="Palme K."/>
        </authorList>
    </citation>
    <scope>NUCLEOTIDE SEQUENCE [LARGE SCALE MRNA] OF 2-229</scope>
    <source>
        <tissue>Leaf</tissue>
    </source>
</reference>
<reference key="5">
    <citation type="submission" date="2005-03" db="EMBL/GenBank/DDBJ databases">
        <title>Large-scale analysis of RIKEN Arabidopsis full-length (RAFL) cDNAs.</title>
        <authorList>
            <person name="Totoki Y."/>
            <person name="Seki M."/>
            <person name="Ishida J."/>
            <person name="Nakajima M."/>
            <person name="Enju A."/>
            <person name="Kamiya A."/>
            <person name="Narusaka M."/>
            <person name="Shin-i T."/>
            <person name="Nakagawa M."/>
            <person name="Sakamoto N."/>
            <person name="Oishi K."/>
            <person name="Kohara Y."/>
            <person name="Kobayashi M."/>
            <person name="Toyoda A."/>
            <person name="Sakaki Y."/>
            <person name="Sakurai T."/>
            <person name="Iida K."/>
            <person name="Akiyama K."/>
            <person name="Satou M."/>
            <person name="Toyoda T."/>
            <person name="Konagaya A."/>
            <person name="Carninci P."/>
            <person name="Kawai J."/>
            <person name="Hayashizaki Y."/>
            <person name="Shinozaki K."/>
        </authorList>
    </citation>
    <scope>NUCLEOTIDE SEQUENCE [LARGE SCALE MRNA] OF 165-229</scope>
    <source>
        <strain>cv. Columbia</strain>
    </source>
</reference>
<reference key="6">
    <citation type="journal article" date="2006" name="Development">
        <title>The Arabidopsis elch mutant reveals functions of an ESCRT component in cytokinesis.</title>
        <authorList>
            <person name="Spitzer C."/>
            <person name="Schellmann S."/>
            <person name="Sabovljevic A."/>
            <person name="Shahriari M."/>
            <person name="Keshavaiah C."/>
            <person name="Bechtold N."/>
            <person name="Herzog M."/>
            <person name="Mueller S."/>
            <person name="Hanisch F.-G."/>
            <person name="Huelskamp M."/>
        </authorList>
    </citation>
    <scope>IDENTIFICATION</scope>
    <scope>NOMENCLATURE</scope>
</reference>
<reference key="7">
    <citation type="journal article" date="2006" name="Trends Plant Sci.">
        <title>Exploring the ESCRTing machinery in eukaryotes.</title>
        <authorList>
            <person name="Winter V."/>
            <person name="Hauser M.-T."/>
        </authorList>
    </citation>
    <scope>IDENTIFICATION</scope>
</reference>
<reference key="8">
    <citation type="journal article" date="2010" name="Plant J.">
        <title>The AAA-type ATPase AtSKD1 contributes to vacuolar maintenance of Arabidopsis thaliana.</title>
        <authorList>
            <person name="Shahriari M."/>
            <person name="Keshavaiah C."/>
            <person name="Scheuring D."/>
            <person name="Sabovljevic A."/>
            <person name="Pimpl P."/>
            <person name="Haeusler R.E."/>
            <person name="Huelskamp M."/>
            <person name="Schellmann S."/>
        </authorList>
    </citation>
    <scope>INTERACTION WITH SKD1</scope>
    <source>
        <strain>cv. Columbia</strain>
    </source>
</reference>
<organism>
    <name type="scientific">Arabidopsis thaliana</name>
    <name type="common">Mouse-ear cress</name>
    <dbReference type="NCBI Taxonomy" id="3702"/>
    <lineage>
        <taxon>Eukaryota</taxon>
        <taxon>Viridiplantae</taxon>
        <taxon>Streptophyta</taxon>
        <taxon>Embryophyta</taxon>
        <taxon>Tracheophyta</taxon>
        <taxon>Spermatophyta</taxon>
        <taxon>Magnoliopsida</taxon>
        <taxon>eudicotyledons</taxon>
        <taxon>Gunneridae</taxon>
        <taxon>Pentapetalae</taxon>
        <taxon>rosids</taxon>
        <taxon>malvids</taxon>
        <taxon>Brassicales</taxon>
        <taxon>Brassicaceae</taxon>
        <taxon>Camelineae</taxon>
        <taxon>Arabidopsis</taxon>
    </lineage>
</organism>
<evidence type="ECO:0000250" key="1"/>
<evidence type="ECO:0000250" key="2">
    <source>
        <dbReference type="UniProtKB" id="Q9Y3E7"/>
    </source>
</evidence>
<evidence type="ECO:0000255" key="3"/>
<evidence type="ECO:0000256" key="4">
    <source>
        <dbReference type="SAM" id="MobiDB-lite"/>
    </source>
</evidence>
<evidence type="ECO:0000269" key="5">
    <source>
    </source>
</evidence>
<evidence type="ECO:0000305" key="6"/>
<comment type="function">
    <text evidence="1">Component of the ESCRT-III complex, which is required for multivesicular bodies (MVBs) formation and sorting of endosomal cargo proteins into MVBs. The ESCRT-III complex is probably involved in the concentration of MVB cargo (By similarity).</text>
</comment>
<comment type="subunit">
    <text evidence="2 5">Component of the endosomal sorting required for transport complex III (ESCRT-III), composed at least of VPS2, VPS20, VPS24 and VPS32 (By similarity). Interacts with SKD1 (PubMed:20663085).</text>
</comment>
<comment type="subcellular location">
    <subcellularLocation>
        <location evidence="1">Endosome</location>
    </subcellularLocation>
</comment>
<comment type="similarity">
    <text evidence="6">Belongs to the SNF7 family.</text>
</comment>
<comment type="sequence caution" evidence="6">
    <conflict type="erroneous initiation">
        <sequence resource="EMBL-CDS" id="AAN60307"/>
    </conflict>
    <text>Truncated N-terminus.</text>
</comment>
<proteinExistence type="evidence at protein level"/>
<keyword id="KW-0175">Coiled coil</keyword>
<keyword id="KW-0967">Endosome</keyword>
<keyword id="KW-0653">Protein transport</keyword>
<keyword id="KW-1185">Reference proteome</keyword>
<keyword id="KW-0813">Transport</keyword>